<accession>Q9CIR5</accession>
<feature type="chain" id="PRO_0000163128" description="DNA-directed RNA polymerase subunit epsilon">
    <location>
        <begin position="1"/>
        <end position="76"/>
    </location>
</feature>
<dbReference type="EC" id="2.7.7.6" evidence="1"/>
<dbReference type="EMBL" id="AE005176">
    <property type="protein sequence ID" value="AAK04389.1"/>
    <property type="molecule type" value="Genomic_DNA"/>
</dbReference>
<dbReference type="PIR" id="C86661">
    <property type="entry name" value="C86661"/>
</dbReference>
<dbReference type="RefSeq" id="NP_266447.1">
    <property type="nucleotide sequence ID" value="NC_002662.1"/>
</dbReference>
<dbReference type="RefSeq" id="WP_003131711.1">
    <property type="nucleotide sequence ID" value="NC_002662.1"/>
</dbReference>
<dbReference type="SMR" id="Q9CIR5"/>
<dbReference type="PaxDb" id="272623-L91273"/>
<dbReference type="EnsemblBacteria" id="AAK04389">
    <property type="protein sequence ID" value="AAK04389"/>
    <property type="gene ID" value="L91273"/>
</dbReference>
<dbReference type="KEGG" id="lla:L91273"/>
<dbReference type="PATRIC" id="fig|272623.7.peg.320"/>
<dbReference type="eggNOG" id="COG5503">
    <property type="taxonomic scope" value="Bacteria"/>
</dbReference>
<dbReference type="HOGENOM" id="CLU_187518_0_0_9"/>
<dbReference type="OrthoDB" id="2147503at2"/>
<dbReference type="Proteomes" id="UP000002196">
    <property type="component" value="Chromosome"/>
</dbReference>
<dbReference type="GO" id="GO:0000428">
    <property type="term" value="C:DNA-directed RNA polymerase complex"/>
    <property type="evidence" value="ECO:0007669"/>
    <property type="project" value="UniProtKB-KW"/>
</dbReference>
<dbReference type="GO" id="GO:0003677">
    <property type="term" value="F:DNA binding"/>
    <property type="evidence" value="ECO:0007669"/>
    <property type="project" value="UniProtKB-UniRule"/>
</dbReference>
<dbReference type="GO" id="GO:0003899">
    <property type="term" value="F:DNA-directed RNA polymerase activity"/>
    <property type="evidence" value="ECO:0007669"/>
    <property type="project" value="UniProtKB-UniRule"/>
</dbReference>
<dbReference type="GO" id="GO:0006351">
    <property type="term" value="P:DNA-templated transcription"/>
    <property type="evidence" value="ECO:0007669"/>
    <property type="project" value="UniProtKB-UniRule"/>
</dbReference>
<dbReference type="Gene3D" id="3.10.20.730">
    <property type="entry name" value="RNAP, epsilon subunit-like"/>
    <property type="match status" value="1"/>
</dbReference>
<dbReference type="HAMAP" id="MF_01553">
    <property type="entry name" value="RNApol_bact_RpoY"/>
    <property type="match status" value="1"/>
</dbReference>
<dbReference type="InterPro" id="IPR009907">
    <property type="entry name" value="RpoY"/>
</dbReference>
<dbReference type="NCBIfam" id="NF010188">
    <property type="entry name" value="PRK13667.1"/>
    <property type="match status" value="1"/>
</dbReference>
<dbReference type="Pfam" id="PF07288">
    <property type="entry name" value="RpoY"/>
    <property type="match status" value="1"/>
</dbReference>
<name>RPOY_LACLA</name>
<gene>
    <name evidence="1" type="primary">rpoY</name>
    <name type="synonym">ycjA</name>
    <name type="ordered locus">LL0291</name>
    <name type="ORF">L91273</name>
</gene>
<evidence type="ECO:0000255" key="1">
    <source>
        <dbReference type="HAMAP-Rule" id="MF_01553"/>
    </source>
</evidence>
<protein>
    <recommendedName>
        <fullName evidence="1">DNA-directed RNA polymerase subunit epsilon</fullName>
        <shortName evidence="1">RNAP epsilon subunit</shortName>
        <ecNumber evidence="1">2.7.7.6</ecNumber>
    </recommendedName>
    <alternativeName>
        <fullName evidence="1">RNA polymerase epsilon subunit</fullName>
    </alternativeName>
    <alternativeName>
        <fullName evidence="1">Transcriptase subunit epsilon</fullName>
    </alternativeName>
</protein>
<organism>
    <name type="scientific">Lactococcus lactis subsp. lactis (strain IL1403)</name>
    <name type="common">Streptococcus lactis</name>
    <dbReference type="NCBI Taxonomy" id="272623"/>
    <lineage>
        <taxon>Bacteria</taxon>
        <taxon>Bacillati</taxon>
        <taxon>Bacillota</taxon>
        <taxon>Bacilli</taxon>
        <taxon>Lactobacillales</taxon>
        <taxon>Streptococcaceae</taxon>
        <taxon>Lactococcus</taxon>
    </lineage>
</organism>
<keyword id="KW-0240">DNA-directed RNA polymerase</keyword>
<keyword id="KW-0548">Nucleotidyltransferase</keyword>
<keyword id="KW-1185">Reference proteome</keyword>
<keyword id="KW-0804">Transcription</keyword>
<keyword id="KW-0808">Transferase</keyword>
<reference key="1">
    <citation type="journal article" date="2001" name="Genome Res.">
        <title>The complete genome sequence of the lactic acid bacterium Lactococcus lactis ssp. lactis IL1403.</title>
        <authorList>
            <person name="Bolotin A."/>
            <person name="Wincker P."/>
            <person name="Mauger S."/>
            <person name="Jaillon O."/>
            <person name="Malarme K."/>
            <person name="Weissenbach J."/>
            <person name="Ehrlich S.D."/>
            <person name="Sorokin A."/>
        </authorList>
    </citation>
    <scope>NUCLEOTIDE SEQUENCE [LARGE SCALE GENOMIC DNA]</scope>
    <source>
        <strain>IL1403</strain>
    </source>
</reference>
<sequence length="76" mass="8842">MIFKVFYQKDNTRSPRRETTEALYLDLDVATKEEGVILARELLAKNTAYHVEFIDSLSDESVEYEKETGVFEITSF</sequence>
<proteinExistence type="inferred from homology"/>
<comment type="function">
    <text evidence="1">A non-essential component of RNA polymerase (RNAP).</text>
</comment>
<comment type="catalytic activity">
    <reaction evidence="1">
        <text>RNA(n) + a ribonucleoside 5'-triphosphate = RNA(n+1) + diphosphate</text>
        <dbReference type="Rhea" id="RHEA:21248"/>
        <dbReference type="Rhea" id="RHEA-COMP:14527"/>
        <dbReference type="Rhea" id="RHEA-COMP:17342"/>
        <dbReference type="ChEBI" id="CHEBI:33019"/>
        <dbReference type="ChEBI" id="CHEBI:61557"/>
        <dbReference type="ChEBI" id="CHEBI:140395"/>
        <dbReference type="EC" id="2.7.7.6"/>
    </reaction>
</comment>
<comment type="subunit">
    <text evidence="1">RNAP is composed of a core of 2 alpha, a beta and a beta' subunit. The core is associated with a delta subunit, and at least one of epsilon or omega. When a sigma factor is associated with the core the holoenzyme is formed, which can initiate transcription.</text>
</comment>
<comment type="similarity">
    <text evidence="1">Belongs to the RNA polymerase subunit epsilon family.</text>
</comment>